<accession>Q3Z319</accession>
<gene>
    <name evidence="1" type="primary">tmk</name>
    <name type="ordered locus">SSON_1118</name>
</gene>
<protein>
    <recommendedName>
        <fullName evidence="1">Thymidylate kinase</fullName>
        <ecNumber evidence="1">2.7.4.9</ecNumber>
    </recommendedName>
    <alternativeName>
        <fullName evidence="1">dTMP kinase</fullName>
    </alternativeName>
</protein>
<keyword id="KW-0067">ATP-binding</keyword>
<keyword id="KW-0418">Kinase</keyword>
<keyword id="KW-0545">Nucleotide biosynthesis</keyword>
<keyword id="KW-0547">Nucleotide-binding</keyword>
<keyword id="KW-1185">Reference proteome</keyword>
<keyword id="KW-0808">Transferase</keyword>
<dbReference type="EC" id="2.7.4.9" evidence="1"/>
<dbReference type="EMBL" id="CP000038">
    <property type="protein sequence ID" value="AAZ87843.1"/>
    <property type="molecule type" value="Genomic_DNA"/>
</dbReference>
<dbReference type="RefSeq" id="WP_001257000.1">
    <property type="nucleotide sequence ID" value="NC_007384.1"/>
</dbReference>
<dbReference type="SMR" id="Q3Z319"/>
<dbReference type="GeneID" id="93776310"/>
<dbReference type="KEGG" id="ssn:SSON_1118"/>
<dbReference type="HOGENOM" id="CLU_049131_0_1_6"/>
<dbReference type="Proteomes" id="UP000002529">
    <property type="component" value="Chromosome"/>
</dbReference>
<dbReference type="GO" id="GO:0005829">
    <property type="term" value="C:cytosol"/>
    <property type="evidence" value="ECO:0007669"/>
    <property type="project" value="TreeGrafter"/>
</dbReference>
<dbReference type="GO" id="GO:0005524">
    <property type="term" value="F:ATP binding"/>
    <property type="evidence" value="ECO:0007669"/>
    <property type="project" value="UniProtKB-UniRule"/>
</dbReference>
<dbReference type="GO" id="GO:0004798">
    <property type="term" value="F:dTMP kinase activity"/>
    <property type="evidence" value="ECO:0007669"/>
    <property type="project" value="UniProtKB-UniRule"/>
</dbReference>
<dbReference type="GO" id="GO:0006233">
    <property type="term" value="P:dTDP biosynthetic process"/>
    <property type="evidence" value="ECO:0007669"/>
    <property type="project" value="InterPro"/>
</dbReference>
<dbReference type="GO" id="GO:0006235">
    <property type="term" value="P:dTTP biosynthetic process"/>
    <property type="evidence" value="ECO:0007669"/>
    <property type="project" value="UniProtKB-UniRule"/>
</dbReference>
<dbReference type="GO" id="GO:0006227">
    <property type="term" value="P:dUDP biosynthetic process"/>
    <property type="evidence" value="ECO:0007669"/>
    <property type="project" value="TreeGrafter"/>
</dbReference>
<dbReference type="CDD" id="cd01672">
    <property type="entry name" value="TMPK"/>
    <property type="match status" value="1"/>
</dbReference>
<dbReference type="FunFam" id="3.40.50.300:FF:000321">
    <property type="entry name" value="Thymidylate kinase"/>
    <property type="match status" value="1"/>
</dbReference>
<dbReference type="Gene3D" id="3.40.50.300">
    <property type="entry name" value="P-loop containing nucleotide triphosphate hydrolases"/>
    <property type="match status" value="1"/>
</dbReference>
<dbReference type="HAMAP" id="MF_00165">
    <property type="entry name" value="Thymidylate_kinase"/>
    <property type="match status" value="1"/>
</dbReference>
<dbReference type="InterPro" id="IPR027417">
    <property type="entry name" value="P-loop_NTPase"/>
</dbReference>
<dbReference type="InterPro" id="IPR039430">
    <property type="entry name" value="Thymidylate_kin-like_dom"/>
</dbReference>
<dbReference type="InterPro" id="IPR018095">
    <property type="entry name" value="Thymidylate_kin_CS"/>
</dbReference>
<dbReference type="InterPro" id="IPR018094">
    <property type="entry name" value="Thymidylate_kinase"/>
</dbReference>
<dbReference type="NCBIfam" id="TIGR00041">
    <property type="entry name" value="DTMP_kinase"/>
    <property type="match status" value="1"/>
</dbReference>
<dbReference type="PANTHER" id="PTHR10344">
    <property type="entry name" value="THYMIDYLATE KINASE"/>
    <property type="match status" value="1"/>
</dbReference>
<dbReference type="PANTHER" id="PTHR10344:SF4">
    <property type="entry name" value="UMP-CMP KINASE 2, MITOCHONDRIAL"/>
    <property type="match status" value="1"/>
</dbReference>
<dbReference type="Pfam" id="PF02223">
    <property type="entry name" value="Thymidylate_kin"/>
    <property type="match status" value="1"/>
</dbReference>
<dbReference type="SUPFAM" id="SSF52540">
    <property type="entry name" value="P-loop containing nucleoside triphosphate hydrolases"/>
    <property type="match status" value="1"/>
</dbReference>
<dbReference type="PROSITE" id="PS01331">
    <property type="entry name" value="THYMIDYLATE_KINASE"/>
    <property type="match status" value="1"/>
</dbReference>
<reference key="1">
    <citation type="journal article" date="2005" name="Nucleic Acids Res.">
        <title>Genome dynamics and diversity of Shigella species, the etiologic agents of bacillary dysentery.</title>
        <authorList>
            <person name="Yang F."/>
            <person name="Yang J."/>
            <person name="Zhang X."/>
            <person name="Chen L."/>
            <person name="Jiang Y."/>
            <person name="Yan Y."/>
            <person name="Tang X."/>
            <person name="Wang J."/>
            <person name="Xiong Z."/>
            <person name="Dong J."/>
            <person name="Xue Y."/>
            <person name="Zhu Y."/>
            <person name="Xu X."/>
            <person name="Sun L."/>
            <person name="Chen S."/>
            <person name="Nie H."/>
            <person name="Peng J."/>
            <person name="Xu J."/>
            <person name="Wang Y."/>
            <person name="Yuan Z."/>
            <person name="Wen Y."/>
            <person name="Yao Z."/>
            <person name="Shen Y."/>
            <person name="Qiang B."/>
            <person name="Hou Y."/>
            <person name="Yu J."/>
            <person name="Jin Q."/>
        </authorList>
    </citation>
    <scope>NUCLEOTIDE SEQUENCE [LARGE SCALE GENOMIC DNA]</scope>
    <source>
        <strain>Ss046</strain>
    </source>
</reference>
<proteinExistence type="inferred from homology"/>
<evidence type="ECO:0000255" key="1">
    <source>
        <dbReference type="HAMAP-Rule" id="MF_00165"/>
    </source>
</evidence>
<comment type="function">
    <text evidence="1">Phosphorylation of dTMP to form dTDP in both de novo and salvage pathways of dTTP synthesis.</text>
</comment>
<comment type="catalytic activity">
    <reaction evidence="1">
        <text>dTMP + ATP = dTDP + ADP</text>
        <dbReference type="Rhea" id="RHEA:13517"/>
        <dbReference type="ChEBI" id="CHEBI:30616"/>
        <dbReference type="ChEBI" id="CHEBI:58369"/>
        <dbReference type="ChEBI" id="CHEBI:63528"/>
        <dbReference type="ChEBI" id="CHEBI:456216"/>
        <dbReference type="EC" id="2.7.4.9"/>
    </reaction>
</comment>
<comment type="similarity">
    <text evidence="1">Belongs to the thymidylate kinase family.</text>
</comment>
<sequence length="213" mass="23783">MRSKYIVIEGLEGAGKTTARNVVVETLEQLGIRDMVFTREPGGTQLAEKLRSLVLDIKSVGDEVITDKAEVLMFYAARVQLVETVIKPALANGTWVIGDRHDLSTQAYQGGGRGIDQHMLATLRDAVLGDFRPDLTLYLDVTPEVGLKRARARGELDRIEQESFDFFNRTRARYLELAAQDKSIHTIDATQPLEAVMDAIRTTVTHWVKELDA</sequence>
<organism>
    <name type="scientific">Shigella sonnei (strain Ss046)</name>
    <dbReference type="NCBI Taxonomy" id="300269"/>
    <lineage>
        <taxon>Bacteria</taxon>
        <taxon>Pseudomonadati</taxon>
        <taxon>Pseudomonadota</taxon>
        <taxon>Gammaproteobacteria</taxon>
        <taxon>Enterobacterales</taxon>
        <taxon>Enterobacteriaceae</taxon>
        <taxon>Shigella</taxon>
    </lineage>
</organism>
<feature type="chain" id="PRO_1000023284" description="Thymidylate kinase">
    <location>
        <begin position="1"/>
        <end position="213"/>
    </location>
</feature>
<feature type="binding site" evidence="1">
    <location>
        <begin position="10"/>
        <end position="17"/>
    </location>
    <ligand>
        <name>ATP</name>
        <dbReference type="ChEBI" id="CHEBI:30616"/>
    </ligand>
</feature>
<name>KTHY_SHISS</name>